<sequence length="320" mass="35252">MQTRNTLSWIKEEITRSISVSLMIYIITWASISNAYPIFAQQGYENPREATGRIVCANCHLANKPVDIEVPQAVLPDTVFEAVVRIPYDMQLKQVLANGKKGGLNVGAVLILPEGFELAPPDRISPEMKEKIGNLSFQNYRPTQKKILVIGPVPGQKYSEITFPILSPDPATNKDVHFLKYPIYVGGNRGRGQIYPDGRKSNNTVYNATAAGIVSKILRKEKGGYEITIVDASDGRQVVDIIPPGPELLVSEGESIKLDQPLTSNPNVGGFGQGDAEIVLQDPSRVQGLLFFLASVVLAQIFLVLKKKQFEKVQLSEMNF</sequence>
<name>CYF_CARPA</name>
<evidence type="ECO:0000250" key="1"/>
<evidence type="ECO:0000255" key="2">
    <source>
        <dbReference type="HAMAP-Rule" id="MF_00610"/>
    </source>
</evidence>
<reference key="1">
    <citation type="journal article" date="2008" name="Nature">
        <title>The draft genome of the transgenic tropical fruit tree papaya (Carica papaya Linnaeus).</title>
        <authorList>
            <person name="Ming R."/>
            <person name="Hou S."/>
            <person name="Feng Y."/>
            <person name="Yu Q."/>
            <person name="Dionne-Laporte A."/>
            <person name="Saw J.H."/>
            <person name="Senin P."/>
            <person name="Wang W."/>
            <person name="Ly B.V."/>
            <person name="Lewis K.L."/>
            <person name="Salzberg S.L."/>
            <person name="Feng L."/>
            <person name="Jones M.R."/>
            <person name="Skelton R.L."/>
            <person name="Murray J.E."/>
            <person name="Chen C."/>
            <person name="Qian W."/>
            <person name="Shen J."/>
            <person name="Du P."/>
            <person name="Eustice M."/>
            <person name="Tong E."/>
            <person name="Tang H."/>
            <person name="Lyons E."/>
            <person name="Paull R.E."/>
            <person name="Michael T.P."/>
            <person name="Wall K."/>
            <person name="Rice D.W."/>
            <person name="Albert H."/>
            <person name="Wang M.L."/>
            <person name="Zhu Y.J."/>
            <person name="Schatz M."/>
            <person name="Nagarajan N."/>
            <person name="Acob R.A."/>
            <person name="Guan P."/>
            <person name="Blas A."/>
            <person name="Wai C.M."/>
            <person name="Ackerman C.M."/>
            <person name="Ren Y."/>
            <person name="Liu C."/>
            <person name="Wang J."/>
            <person name="Wang J."/>
            <person name="Na J.K."/>
            <person name="Shakirov E.V."/>
            <person name="Haas B."/>
            <person name="Thimmapuram J."/>
            <person name="Nelson D."/>
            <person name="Wang X."/>
            <person name="Bowers J.E."/>
            <person name="Gschwend A.R."/>
            <person name="Delcher A.L."/>
            <person name="Singh R."/>
            <person name="Suzuki J.Y."/>
            <person name="Tripathi S."/>
            <person name="Neupane K."/>
            <person name="Wei H."/>
            <person name="Irikura B."/>
            <person name="Paidi M."/>
            <person name="Jiang N."/>
            <person name="Zhang W."/>
            <person name="Presting G."/>
            <person name="Windsor A."/>
            <person name="Navajas-Perez R."/>
            <person name="Torres M.J."/>
            <person name="Feltus F.A."/>
            <person name="Porter B."/>
            <person name="Li Y."/>
            <person name="Burroughs A.M."/>
            <person name="Luo M.C."/>
            <person name="Liu L."/>
            <person name="Christopher D.A."/>
            <person name="Mount S.M."/>
            <person name="Moore P.H."/>
            <person name="Sugimura T."/>
            <person name="Jiang J."/>
            <person name="Schuler M.A."/>
            <person name="Friedman V."/>
            <person name="Mitchell-Olds T."/>
            <person name="Shippen D.E."/>
            <person name="dePamphilis C.W."/>
            <person name="Palmer J.D."/>
            <person name="Freeling M."/>
            <person name="Paterson A.H."/>
            <person name="Gonsalves D."/>
            <person name="Wang L."/>
            <person name="Alam M."/>
        </authorList>
    </citation>
    <scope>NUCLEOTIDE SEQUENCE [LARGE SCALE GENOMIC DNA]</scope>
    <source>
        <strain>cv. SunUp</strain>
    </source>
</reference>
<feature type="signal peptide" evidence="2">
    <location>
        <begin position="1"/>
        <end position="35"/>
    </location>
</feature>
<feature type="chain" id="PRO_0000342051" description="Cytochrome f">
    <location>
        <begin position="36"/>
        <end position="320"/>
    </location>
</feature>
<feature type="transmembrane region" description="Helical" evidence="2">
    <location>
        <begin position="286"/>
        <end position="306"/>
    </location>
</feature>
<feature type="binding site" description="axial binding residue" evidence="2">
    <location>
        <position position="36"/>
    </location>
    <ligand>
        <name>heme</name>
        <dbReference type="ChEBI" id="CHEBI:30413"/>
    </ligand>
    <ligandPart>
        <name>Fe</name>
        <dbReference type="ChEBI" id="CHEBI:18248"/>
    </ligandPart>
</feature>
<feature type="binding site" description="covalent" evidence="2">
    <location>
        <position position="56"/>
    </location>
    <ligand>
        <name>heme</name>
        <dbReference type="ChEBI" id="CHEBI:30413"/>
    </ligand>
</feature>
<feature type="binding site" description="covalent" evidence="2">
    <location>
        <position position="59"/>
    </location>
    <ligand>
        <name>heme</name>
        <dbReference type="ChEBI" id="CHEBI:30413"/>
    </ligand>
</feature>
<feature type="binding site" description="axial binding residue" evidence="2">
    <location>
        <position position="60"/>
    </location>
    <ligand>
        <name>heme</name>
        <dbReference type="ChEBI" id="CHEBI:30413"/>
    </ligand>
    <ligandPart>
        <name>Fe</name>
        <dbReference type="ChEBI" id="CHEBI:18248"/>
    </ligandPart>
</feature>
<dbReference type="EMBL" id="EU431223">
    <property type="protein sequence ID" value="ABY86795.1"/>
    <property type="molecule type" value="Genomic_DNA"/>
</dbReference>
<dbReference type="RefSeq" id="YP_001671696.1">
    <property type="nucleotide sequence ID" value="NC_010323.1"/>
</dbReference>
<dbReference type="SMR" id="B1A948"/>
<dbReference type="GeneID" id="5878447"/>
<dbReference type="KEGG" id="cpap:5878447"/>
<dbReference type="OrthoDB" id="1032918at2759"/>
<dbReference type="GO" id="GO:0009535">
    <property type="term" value="C:chloroplast thylakoid membrane"/>
    <property type="evidence" value="ECO:0007669"/>
    <property type="project" value="UniProtKB-SubCell"/>
</dbReference>
<dbReference type="GO" id="GO:0009055">
    <property type="term" value="F:electron transfer activity"/>
    <property type="evidence" value="ECO:0007669"/>
    <property type="project" value="UniProtKB-UniRule"/>
</dbReference>
<dbReference type="GO" id="GO:0020037">
    <property type="term" value="F:heme binding"/>
    <property type="evidence" value="ECO:0007669"/>
    <property type="project" value="InterPro"/>
</dbReference>
<dbReference type="GO" id="GO:0005506">
    <property type="term" value="F:iron ion binding"/>
    <property type="evidence" value="ECO:0007669"/>
    <property type="project" value="InterPro"/>
</dbReference>
<dbReference type="GO" id="GO:0015979">
    <property type="term" value="P:photosynthesis"/>
    <property type="evidence" value="ECO:0007669"/>
    <property type="project" value="UniProtKB-UniRule"/>
</dbReference>
<dbReference type="FunFam" id="1.20.5.700:FF:000001">
    <property type="entry name" value="Cytochrome f"/>
    <property type="match status" value="1"/>
</dbReference>
<dbReference type="FunFam" id="2.40.50.100:FF:000007">
    <property type="entry name" value="Cytochrome f"/>
    <property type="match status" value="1"/>
</dbReference>
<dbReference type="FunFam" id="2.60.40.830:FF:000001">
    <property type="entry name" value="Cytochrome f"/>
    <property type="match status" value="1"/>
</dbReference>
<dbReference type="Gene3D" id="2.40.50.100">
    <property type="match status" value="1"/>
</dbReference>
<dbReference type="Gene3D" id="2.60.40.830">
    <property type="entry name" value="Cytochrome f large domain"/>
    <property type="match status" value="1"/>
</dbReference>
<dbReference type="Gene3D" id="1.20.5.700">
    <property type="entry name" value="Single helix bin"/>
    <property type="match status" value="1"/>
</dbReference>
<dbReference type="HAMAP" id="MF_00610">
    <property type="entry name" value="Cytb6_f_cytF"/>
    <property type="match status" value="1"/>
</dbReference>
<dbReference type="InterPro" id="IPR024058">
    <property type="entry name" value="Cyt-f_TM"/>
</dbReference>
<dbReference type="InterPro" id="IPR002325">
    <property type="entry name" value="Cyt_f"/>
</dbReference>
<dbReference type="InterPro" id="IPR024094">
    <property type="entry name" value="Cyt_f_lg_dom"/>
</dbReference>
<dbReference type="InterPro" id="IPR036826">
    <property type="entry name" value="Cyt_f_lg_dom_sf"/>
</dbReference>
<dbReference type="InterPro" id="IPR011054">
    <property type="entry name" value="Rudment_hybrid_motif"/>
</dbReference>
<dbReference type="PANTHER" id="PTHR33288">
    <property type="match status" value="1"/>
</dbReference>
<dbReference type="PANTHER" id="PTHR33288:SF10">
    <property type="entry name" value="CYTOCHROME F"/>
    <property type="match status" value="1"/>
</dbReference>
<dbReference type="Pfam" id="PF01333">
    <property type="entry name" value="Apocytochr_F_C"/>
    <property type="match status" value="1"/>
</dbReference>
<dbReference type="Pfam" id="PF16639">
    <property type="entry name" value="Apocytochr_F_N"/>
    <property type="match status" value="1"/>
</dbReference>
<dbReference type="PRINTS" id="PR00610">
    <property type="entry name" value="CYTOCHROMEF"/>
</dbReference>
<dbReference type="SUPFAM" id="SSF103431">
    <property type="entry name" value="Cytochrome f subunit of the cytochrome b6f complex, transmembrane anchor"/>
    <property type="match status" value="1"/>
</dbReference>
<dbReference type="SUPFAM" id="SSF49441">
    <property type="entry name" value="Cytochrome f, large domain"/>
    <property type="match status" value="1"/>
</dbReference>
<dbReference type="SUPFAM" id="SSF51246">
    <property type="entry name" value="Rudiment single hybrid motif"/>
    <property type="match status" value="1"/>
</dbReference>
<dbReference type="PROSITE" id="PS51010">
    <property type="entry name" value="CYTF"/>
    <property type="match status" value="1"/>
</dbReference>
<organism>
    <name type="scientific">Carica papaya</name>
    <name type="common">Papaya</name>
    <dbReference type="NCBI Taxonomy" id="3649"/>
    <lineage>
        <taxon>Eukaryota</taxon>
        <taxon>Viridiplantae</taxon>
        <taxon>Streptophyta</taxon>
        <taxon>Embryophyta</taxon>
        <taxon>Tracheophyta</taxon>
        <taxon>Spermatophyta</taxon>
        <taxon>Magnoliopsida</taxon>
        <taxon>eudicotyledons</taxon>
        <taxon>Gunneridae</taxon>
        <taxon>Pentapetalae</taxon>
        <taxon>rosids</taxon>
        <taxon>malvids</taxon>
        <taxon>Brassicales</taxon>
        <taxon>Caricaceae</taxon>
        <taxon>Carica</taxon>
    </lineage>
</organism>
<geneLocation type="chloroplast"/>
<accession>B1A948</accession>
<comment type="function">
    <text evidence="2">Component of the cytochrome b6-f complex, which mediates electron transfer between photosystem II (PSII) and photosystem I (PSI), cyclic electron flow around PSI, and state transitions.</text>
</comment>
<comment type="cofactor">
    <cofactor evidence="2">
        <name>heme</name>
        <dbReference type="ChEBI" id="CHEBI:30413"/>
    </cofactor>
    <text evidence="2">Binds 1 heme group covalently.</text>
</comment>
<comment type="subunit">
    <text evidence="1">The 4 large subunits of the cytochrome b6-f complex are cytochrome b6, subunit IV (17 kDa polypeptide, petD), cytochrome f and the Rieske protein, while the 4 small subunits are PetG, PetL, PetM and PetN. The complex functions as a dimer (By similarity).</text>
</comment>
<comment type="subcellular location">
    <subcellularLocation>
        <location evidence="2">Plastid</location>
        <location evidence="2">Chloroplast thylakoid membrane</location>
        <topology evidence="2">Single-pass membrane protein</topology>
    </subcellularLocation>
</comment>
<comment type="similarity">
    <text evidence="2">Belongs to the cytochrome f family.</text>
</comment>
<keyword id="KW-0150">Chloroplast</keyword>
<keyword id="KW-0249">Electron transport</keyword>
<keyword id="KW-0349">Heme</keyword>
<keyword id="KW-0408">Iron</keyword>
<keyword id="KW-0472">Membrane</keyword>
<keyword id="KW-0479">Metal-binding</keyword>
<keyword id="KW-0602">Photosynthesis</keyword>
<keyword id="KW-0934">Plastid</keyword>
<keyword id="KW-0732">Signal</keyword>
<keyword id="KW-0793">Thylakoid</keyword>
<keyword id="KW-0812">Transmembrane</keyword>
<keyword id="KW-1133">Transmembrane helix</keyword>
<keyword id="KW-0813">Transport</keyword>
<gene>
    <name evidence="2" type="primary">petA</name>
</gene>
<proteinExistence type="inferred from homology"/>
<protein>
    <recommendedName>
        <fullName evidence="2">Cytochrome f</fullName>
    </recommendedName>
</protein>